<reference key="1">
    <citation type="journal article" date="2001" name="Nature">
        <title>Genome sequence of Yersinia pestis, the causative agent of plague.</title>
        <authorList>
            <person name="Parkhill J."/>
            <person name="Wren B.W."/>
            <person name="Thomson N.R."/>
            <person name="Titball R.W."/>
            <person name="Holden M.T.G."/>
            <person name="Prentice M.B."/>
            <person name="Sebaihia M."/>
            <person name="James K.D."/>
            <person name="Churcher C.M."/>
            <person name="Mungall K.L."/>
            <person name="Baker S."/>
            <person name="Basham D."/>
            <person name="Bentley S.D."/>
            <person name="Brooks K."/>
            <person name="Cerdeno-Tarraga A.-M."/>
            <person name="Chillingworth T."/>
            <person name="Cronin A."/>
            <person name="Davies R.M."/>
            <person name="Davis P."/>
            <person name="Dougan G."/>
            <person name="Feltwell T."/>
            <person name="Hamlin N."/>
            <person name="Holroyd S."/>
            <person name="Jagels K."/>
            <person name="Karlyshev A.V."/>
            <person name="Leather S."/>
            <person name="Moule S."/>
            <person name="Oyston P.C.F."/>
            <person name="Quail M.A."/>
            <person name="Rutherford K.M."/>
            <person name="Simmonds M."/>
            <person name="Skelton J."/>
            <person name="Stevens K."/>
            <person name="Whitehead S."/>
            <person name="Barrell B.G."/>
        </authorList>
    </citation>
    <scope>NUCLEOTIDE SEQUENCE [LARGE SCALE GENOMIC DNA]</scope>
    <source>
        <strain>CO-92 / Biovar Orientalis</strain>
    </source>
</reference>
<reference key="2">
    <citation type="journal article" date="2002" name="J. Bacteriol.">
        <title>Genome sequence of Yersinia pestis KIM.</title>
        <authorList>
            <person name="Deng W."/>
            <person name="Burland V."/>
            <person name="Plunkett G. III"/>
            <person name="Boutin A."/>
            <person name="Mayhew G.F."/>
            <person name="Liss P."/>
            <person name="Perna N.T."/>
            <person name="Rose D.J."/>
            <person name="Mau B."/>
            <person name="Zhou S."/>
            <person name="Schwartz D.C."/>
            <person name="Fetherston J.D."/>
            <person name="Lindler L.E."/>
            <person name="Brubaker R.R."/>
            <person name="Plano G.V."/>
            <person name="Straley S.C."/>
            <person name="McDonough K.A."/>
            <person name="Nilles M.L."/>
            <person name="Matson J.S."/>
            <person name="Blattner F.R."/>
            <person name="Perry R.D."/>
        </authorList>
    </citation>
    <scope>NUCLEOTIDE SEQUENCE [LARGE SCALE GENOMIC DNA]</scope>
    <source>
        <strain>KIM10+ / Biovar Mediaevalis</strain>
    </source>
</reference>
<reference key="3">
    <citation type="journal article" date="2004" name="DNA Res.">
        <title>Complete genome sequence of Yersinia pestis strain 91001, an isolate avirulent to humans.</title>
        <authorList>
            <person name="Song Y."/>
            <person name="Tong Z."/>
            <person name="Wang J."/>
            <person name="Wang L."/>
            <person name="Guo Z."/>
            <person name="Han Y."/>
            <person name="Zhang J."/>
            <person name="Pei D."/>
            <person name="Zhou D."/>
            <person name="Qin H."/>
            <person name="Pang X."/>
            <person name="Han Y."/>
            <person name="Zhai J."/>
            <person name="Li M."/>
            <person name="Cui B."/>
            <person name="Qi Z."/>
            <person name="Jin L."/>
            <person name="Dai R."/>
            <person name="Chen F."/>
            <person name="Li S."/>
            <person name="Ye C."/>
            <person name="Du Z."/>
            <person name="Lin W."/>
            <person name="Wang J."/>
            <person name="Yu J."/>
            <person name="Yang H."/>
            <person name="Wang J."/>
            <person name="Huang P."/>
            <person name="Yang R."/>
        </authorList>
    </citation>
    <scope>NUCLEOTIDE SEQUENCE [LARGE SCALE GENOMIC DNA]</scope>
    <source>
        <strain>91001 / Biovar Mediaevalis</strain>
    </source>
</reference>
<evidence type="ECO:0000250" key="1">
    <source>
        <dbReference type="UniProtKB" id="P0AE01"/>
    </source>
</evidence>
<evidence type="ECO:0000256" key="2">
    <source>
        <dbReference type="SAM" id="MobiDB-lite"/>
    </source>
</evidence>
<evidence type="ECO:0000305" key="3"/>
<proteinExistence type="inferred from homology"/>
<sequence length="257" mass="28385">MLHNIRIVLVETSHTGNMGSTARAMKTMGLTNLYLVNPLVKPDSQAIALSAGASDVIGKATIVDTLDEALAGCSLVVGTSARSRTLPWPMLEPRECGVRSAREAEHAPVALVFGRERVGLTNDELQKCHYHVAIPANPEYSSLNLAMAVQILAYEVRVAYLDRQQANAPVEEEEEAPYPLVDDLERFYQHLEQVLSHSGFIRQAHPGQIMSKLRRLFTRARPEAQELNILRGMLTSIEKQDKYPQRGTGDTAGKSKD</sequence>
<keyword id="KW-0963">Cytoplasm</keyword>
<keyword id="KW-0489">Methyltransferase</keyword>
<keyword id="KW-1185">Reference proteome</keyword>
<keyword id="KW-0949">S-adenosyl-L-methionine</keyword>
<keyword id="KW-0808">Transferase</keyword>
<keyword id="KW-0819">tRNA processing</keyword>
<protein>
    <recommendedName>
        <fullName evidence="1">tRNA (cytidine/uridine-2'-O-)-methyltransferase TrmJ</fullName>
        <ecNumber evidence="1">2.1.1.200</ecNumber>
    </recommendedName>
    <alternativeName>
        <fullName evidence="1">tRNA (cytidine(32)/uridine(32)-2'-O)-methyltransferase</fullName>
    </alternativeName>
    <alternativeName>
        <fullName evidence="1">tRNA Cm32/Um32 methyltransferase</fullName>
    </alternativeName>
</protein>
<organism>
    <name type="scientific">Yersinia pestis</name>
    <dbReference type="NCBI Taxonomy" id="632"/>
    <lineage>
        <taxon>Bacteria</taxon>
        <taxon>Pseudomonadati</taxon>
        <taxon>Pseudomonadota</taxon>
        <taxon>Gammaproteobacteria</taxon>
        <taxon>Enterobacterales</taxon>
        <taxon>Yersiniaceae</taxon>
        <taxon>Yersinia</taxon>
    </lineage>
</organism>
<comment type="function">
    <text evidence="1">Catalyzes the formation of 2'O-methylated cytidine (Cm32) or 2'O-methylated uridine (Um32) at position 32 in tRNA.</text>
</comment>
<comment type="catalytic activity">
    <reaction evidence="1">
        <text>cytidine(32) in tRNA + S-adenosyl-L-methionine = 2'-O-methylcytidine(32) in tRNA + S-adenosyl-L-homocysteine + H(+)</text>
        <dbReference type="Rhea" id="RHEA:42932"/>
        <dbReference type="Rhea" id="RHEA-COMP:10288"/>
        <dbReference type="Rhea" id="RHEA-COMP:10289"/>
        <dbReference type="ChEBI" id="CHEBI:15378"/>
        <dbReference type="ChEBI" id="CHEBI:57856"/>
        <dbReference type="ChEBI" id="CHEBI:59789"/>
        <dbReference type="ChEBI" id="CHEBI:74495"/>
        <dbReference type="ChEBI" id="CHEBI:82748"/>
        <dbReference type="EC" id="2.1.1.200"/>
    </reaction>
</comment>
<comment type="catalytic activity">
    <reaction evidence="1">
        <text>uridine(32) in tRNA + S-adenosyl-L-methionine = 2'-O-methyluridine(32) in tRNA + S-adenosyl-L-homocysteine + H(+)</text>
        <dbReference type="Rhea" id="RHEA:42936"/>
        <dbReference type="Rhea" id="RHEA-COMP:10107"/>
        <dbReference type="Rhea" id="RHEA-COMP:10290"/>
        <dbReference type="ChEBI" id="CHEBI:15378"/>
        <dbReference type="ChEBI" id="CHEBI:57856"/>
        <dbReference type="ChEBI" id="CHEBI:59789"/>
        <dbReference type="ChEBI" id="CHEBI:65315"/>
        <dbReference type="ChEBI" id="CHEBI:74478"/>
        <dbReference type="EC" id="2.1.1.200"/>
    </reaction>
</comment>
<comment type="subunit">
    <text evidence="1">Homodimer.</text>
</comment>
<comment type="subcellular location">
    <subcellularLocation>
        <location evidence="1">Cytoplasm</location>
    </subcellularLocation>
</comment>
<comment type="similarity">
    <text evidence="3">Belongs to the class IV-like SAM-binding methyltransferase superfamily. RNA methyltransferase TrmH family.</text>
</comment>
<feature type="chain" id="PRO_0000313867" description="tRNA (cytidine/uridine-2'-O-)-methyltransferase TrmJ">
    <location>
        <begin position="1"/>
        <end position="257"/>
    </location>
</feature>
<feature type="region of interest" description="Disordered" evidence="2">
    <location>
        <begin position="238"/>
        <end position="257"/>
    </location>
</feature>
<feature type="binding site" evidence="1">
    <location>
        <begin position="79"/>
        <end position="81"/>
    </location>
    <ligand>
        <name>S-adenosyl-L-methionine</name>
        <dbReference type="ChEBI" id="CHEBI:59789"/>
    </ligand>
</feature>
<feature type="binding site" evidence="1">
    <location>
        <position position="114"/>
    </location>
    <ligand>
        <name>S-adenosyl-L-methionine</name>
        <dbReference type="ChEBI" id="CHEBI:59789"/>
    </ligand>
</feature>
<feature type="binding site" evidence="1">
    <location>
        <position position="134"/>
    </location>
    <ligand>
        <name>S-adenosyl-L-methionine</name>
        <dbReference type="ChEBI" id="CHEBI:59789"/>
    </ligand>
</feature>
<feature type="binding site" evidence="1">
    <location>
        <begin position="141"/>
        <end position="143"/>
    </location>
    <ligand>
        <name>S-adenosyl-L-methionine</name>
        <dbReference type="ChEBI" id="CHEBI:59789"/>
    </ligand>
</feature>
<gene>
    <name type="primary">trmJ</name>
    <name type="ordered locus">YPO2898</name>
    <name type="ordered locus">y1332</name>
    <name type="ordered locus">YP_2556</name>
</gene>
<accession>Q7CJN8</accession>
<accession>Q74SN8</accession>
<dbReference type="EC" id="2.1.1.200" evidence="1"/>
<dbReference type="EMBL" id="AL590842">
    <property type="protein sequence ID" value="CAL21509.1"/>
    <property type="molecule type" value="Genomic_DNA"/>
</dbReference>
<dbReference type="EMBL" id="AE009952">
    <property type="protein sequence ID" value="AAM84905.1"/>
    <property type="molecule type" value="Genomic_DNA"/>
</dbReference>
<dbReference type="EMBL" id="AE017042">
    <property type="protein sequence ID" value="AAS62752.1"/>
    <property type="molecule type" value="Genomic_DNA"/>
</dbReference>
<dbReference type="PIR" id="AB0353">
    <property type="entry name" value="AB0353"/>
</dbReference>
<dbReference type="RefSeq" id="WP_002217034.1">
    <property type="nucleotide sequence ID" value="NZ_WUCM01000090.1"/>
</dbReference>
<dbReference type="RefSeq" id="YP_002347832.1">
    <property type="nucleotide sequence ID" value="NC_003143.1"/>
</dbReference>
<dbReference type="SMR" id="Q7CJN8"/>
<dbReference type="STRING" id="214092.YPO2898"/>
<dbReference type="PaxDb" id="214092-YPO2898"/>
<dbReference type="DNASU" id="1146279"/>
<dbReference type="EnsemblBacteria" id="AAS62752">
    <property type="protein sequence ID" value="AAS62752"/>
    <property type="gene ID" value="YP_2556"/>
</dbReference>
<dbReference type="GeneID" id="57975855"/>
<dbReference type="KEGG" id="ype:YPO2898"/>
<dbReference type="KEGG" id="ypk:y1332"/>
<dbReference type="KEGG" id="ypm:YP_2556"/>
<dbReference type="PATRIC" id="fig|214092.21.peg.3348"/>
<dbReference type="eggNOG" id="COG0565">
    <property type="taxonomic scope" value="Bacteria"/>
</dbReference>
<dbReference type="HOGENOM" id="CLU_056931_0_1_6"/>
<dbReference type="OMA" id="ARVMKNM"/>
<dbReference type="OrthoDB" id="9806346at2"/>
<dbReference type="Proteomes" id="UP000000815">
    <property type="component" value="Chromosome"/>
</dbReference>
<dbReference type="Proteomes" id="UP000001019">
    <property type="component" value="Chromosome"/>
</dbReference>
<dbReference type="Proteomes" id="UP000002490">
    <property type="component" value="Chromosome"/>
</dbReference>
<dbReference type="GO" id="GO:0005829">
    <property type="term" value="C:cytosol"/>
    <property type="evidence" value="ECO:0000318"/>
    <property type="project" value="GO_Central"/>
</dbReference>
<dbReference type="GO" id="GO:0003723">
    <property type="term" value="F:RNA binding"/>
    <property type="evidence" value="ECO:0007669"/>
    <property type="project" value="InterPro"/>
</dbReference>
<dbReference type="GO" id="GO:0160206">
    <property type="term" value="F:tRNA (cytidine(32)/uridine(32)-2'-O)-methyltransferase activity"/>
    <property type="evidence" value="ECO:0007669"/>
    <property type="project" value="UniProtKB-EC"/>
</dbReference>
<dbReference type="GO" id="GO:0002128">
    <property type="term" value="P:tRNA nucleoside ribose methylation"/>
    <property type="evidence" value="ECO:0000318"/>
    <property type="project" value="GO_Central"/>
</dbReference>
<dbReference type="CDD" id="cd18093">
    <property type="entry name" value="SpoU-like_TrmJ"/>
    <property type="match status" value="1"/>
</dbReference>
<dbReference type="FunFam" id="1.10.8.590:FF:000001">
    <property type="entry name" value="tRNA:Cm32/Um32 methyltransferase"/>
    <property type="match status" value="1"/>
</dbReference>
<dbReference type="FunFam" id="3.40.1280.10:FF:000006">
    <property type="entry name" value="Uncharacterized tRNA/rRNA methyltransferase HI_0380"/>
    <property type="match status" value="1"/>
</dbReference>
<dbReference type="Gene3D" id="1.10.8.590">
    <property type="match status" value="1"/>
</dbReference>
<dbReference type="Gene3D" id="3.40.1280.10">
    <property type="match status" value="1"/>
</dbReference>
<dbReference type="InterPro" id="IPR029028">
    <property type="entry name" value="Alpha/beta_knot_MTases"/>
</dbReference>
<dbReference type="InterPro" id="IPR004384">
    <property type="entry name" value="RNA_MeTrfase_TrmJ/LasT"/>
</dbReference>
<dbReference type="InterPro" id="IPR001537">
    <property type="entry name" value="SpoU_MeTrfase"/>
</dbReference>
<dbReference type="InterPro" id="IPR029026">
    <property type="entry name" value="tRNA_m1G_MTases_N"/>
</dbReference>
<dbReference type="NCBIfam" id="NF011694">
    <property type="entry name" value="PRK15114.1"/>
    <property type="match status" value="1"/>
</dbReference>
<dbReference type="NCBIfam" id="TIGR00050">
    <property type="entry name" value="rRNA_methyl_1"/>
    <property type="match status" value="1"/>
</dbReference>
<dbReference type="PANTHER" id="PTHR42786:SF2">
    <property type="entry name" value="TRNA (CYTIDINE_URIDINE-2'-O-)-METHYLTRANSFERASE TRMJ"/>
    <property type="match status" value="1"/>
</dbReference>
<dbReference type="PANTHER" id="PTHR42786">
    <property type="entry name" value="TRNA/RRNA METHYLTRANSFERASE"/>
    <property type="match status" value="1"/>
</dbReference>
<dbReference type="Pfam" id="PF00588">
    <property type="entry name" value="SpoU_methylase"/>
    <property type="match status" value="1"/>
</dbReference>
<dbReference type="PIRSF" id="PIRSF004808">
    <property type="entry name" value="LasT"/>
    <property type="match status" value="1"/>
</dbReference>
<dbReference type="SUPFAM" id="SSF75217">
    <property type="entry name" value="alpha/beta knot"/>
    <property type="match status" value="1"/>
</dbReference>
<name>TRMJ_YERPE</name>